<protein>
    <recommendedName>
        <fullName evidence="1">CTP synthase</fullName>
        <ecNumber evidence="1">6.3.4.2</ecNumber>
    </recommendedName>
    <alternativeName>
        <fullName evidence="1">Cytidine 5'-triphosphate synthase</fullName>
    </alternativeName>
    <alternativeName>
        <fullName evidence="1">Cytidine triphosphate synthetase</fullName>
        <shortName evidence="1">CTP synthetase</shortName>
        <shortName evidence="1">CTPS</shortName>
    </alternativeName>
    <alternativeName>
        <fullName evidence="1">UTP--ammonia ligase</fullName>
    </alternativeName>
</protein>
<dbReference type="EC" id="6.3.4.2" evidence="1"/>
<dbReference type="EMBL" id="AE002098">
    <property type="protein sequence ID" value="AAF41908.1"/>
    <property type="molecule type" value="Genomic_DNA"/>
</dbReference>
<dbReference type="PIR" id="F81070">
    <property type="entry name" value="F81070"/>
</dbReference>
<dbReference type="RefSeq" id="NP_274561.1">
    <property type="nucleotide sequence ID" value="NC_003112.2"/>
</dbReference>
<dbReference type="RefSeq" id="WP_002225042.1">
    <property type="nucleotide sequence ID" value="NC_003112.2"/>
</dbReference>
<dbReference type="SMR" id="Q9JYJ8"/>
<dbReference type="FunCoup" id="Q9JYJ8">
    <property type="interactions" value="426"/>
</dbReference>
<dbReference type="STRING" id="122586.NMB1554"/>
<dbReference type="MEROPS" id="C26.964"/>
<dbReference type="PaxDb" id="122586-NMB1554"/>
<dbReference type="KEGG" id="nme:NMB1554"/>
<dbReference type="PATRIC" id="fig|122586.8.peg.2000"/>
<dbReference type="HOGENOM" id="CLU_011675_5_0_4"/>
<dbReference type="InParanoid" id="Q9JYJ8"/>
<dbReference type="OrthoDB" id="9801107at2"/>
<dbReference type="UniPathway" id="UPA00159">
    <property type="reaction ID" value="UER00277"/>
</dbReference>
<dbReference type="Proteomes" id="UP000000425">
    <property type="component" value="Chromosome"/>
</dbReference>
<dbReference type="GO" id="GO:0005829">
    <property type="term" value="C:cytosol"/>
    <property type="evidence" value="ECO:0000318"/>
    <property type="project" value="GO_Central"/>
</dbReference>
<dbReference type="GO" id="GO:0005524">
    <property type="term" value="F:ATP binding"/>
    <property type="evidence" value="ECO:0007669"/>
    <property type="project" value="UniProtKB-KW"/>
</dbReference>
<dbReference type="GO" id="GO:0003883">
    <property type="term" value="F:CTP synthase activity"/>
    <property type="evidence" value="ECO:0000318"/>
    <property type="project" value="GO_Central"/>
</dbReference>
<dbReference type="GO" id="GO:0004359">
    <property type="term" value="F:glutaminase activity"/>
    <property type="evidence" value="ECO:0007669"/>
    <property type="project" value="RHEA"/>
</dbReference>
<dbReference type="GO" id="GO:0042802">
    <property type="term" value="F:identical protein binding"/>
    <property type="evidence" value="ECO:0000318"/>
    <property type="project" value="GO_Central"/>
</dbReference>
<dbReference type="GO" id="GO:0046872">
    <property type="term" value="F:metal ion binding"/>
    <property type="evidence" value="ECO:0007669"/>
    <property type="project" value="UniProtKB-KW"/>
</dbReference>
<dbReference type="GO" id="GO:0044210">
    <property type="term" value="P:'de novo' CTP biosynthetic process"/>
    <property type="evidence" value="ECO:0007669"/>
    <property type="project" value="UniProtKB-UniRule"/>
</dbReference>
<dbReference type="GO" id="GO:0006241">
    <property type="term" value="P:CTP biosynthetic process"/>
    <property type="evidence" value="ECO:0000318"/>
    <property type="project" value="GO_Central"/>
</dbReference>
<dbReference type="GO" id="GO:0019856">
    <property type="term" value="P:pyrimidine nucleobase biosynthetic process"/>
    <property type="evidence" value="ECO:0000318"/>
    <property type="project" value="GO_Central"/>
</dbReference>
<dbReference type="CDD" id="cd03113">
    <property type="entry name" value="CTPS_N"/>
    <property type="match status" value="1"/>
</dbReference>
<dbReference type="CDD" id="cd01746">
    <property type="entry name" value="GATase1_CTP_Synthase"/>
    <property type="match status" value="1"/>
</dbReference>
<dbReference type="FunFam" id="3.40.50.300:FF:000009">
    <property type="entry name" value="CTP synthase"/>
    <property type="match status" value="1"/>
</dbReference>
<dbReference type="FunFam" id="3.40.50.880:FF:000002">
    <property type="entry name" value="CTP synthase"/>
    <property type="match status" value="1"/>
</dbReference>
<dbReference type="Gene3D" id="3.40.50.880">
    <property type="match status" value="1"/>
</dbReference>
<dbReference type="Gene3D" id="3.40.50.300">
    <property type="entry name" value="P-loop containing nucleotide triphosphate hydrolases"/>
    <property type="match status" value="1"/>
</dbReference>
<dbReference type="HAMAP" id="MF_01227">
    <property type="entry name" value="PyrG"/>
    <property type="match status" value="1"/>
</dbReference>
<dbReference type="InterPro" id="IPR029062">
    <property type="entry name" value="Class_I_gatase-like"/>
</dbReference>
<dbReference type="InterPro" id="IPR004468">
    <property type="entry name" value="CTP_synthase"/>
</dbReference>
<dbReference type="InterPro" id="IPR017456">
    <property type="entry name" value="CTP_synthase_N"/>
</dbReference>
<dbReference type="InterPro" id="IPR017926">
    <property type="entry name" value="GATASE"/>
</dbReference>
<dbReference type="InterPro" id="IPR033828">
    <property type="entry name" value="GATase1_CTP_Synthase"/>
</dbReference>
<dbReference type="InterPro" id="IPR027417">
    <property type="entry name" value="P-loop_NTPase"/>
</dbReference>
<dbReference type="NCBIfam" id="NF003792">
    <property type="entry name" value="PRK05380.1"/>
    <property type="match status" value="1"/>
</dbReference>
<dbReference type="NCBIfam" id="TIGR00337">
    <property type="entry name" value="PyrG"/>
    <property type="match status" value="1"/>
</dbReference>
<dbReference type="PANTHER" id="PTHR11550">
    <property type="entry name" value="CTP SYNTHASE"/>
    <property type="match status" value="1"/>
</dbReference>
<dbReference type="PANTHER" id="PTHR11550:SF0">
    <property type="entry name" value="CTP SYNTHASE-RELATED"/>
    <property type="match status" value="1"/>
</dbReference>
<dbReference type="Pfam" id="PF06418">
    <property type="entry name" value="CTP_synth_N"/>
    <property type="match status" value="1"/>
</dbReference>
<dbReference type="Pfam" id="PF00117">
    <property type="entry name" value="GATase"/>
    <property type="match status" value="1"/>
</dbReference>
<dbReference type="SUPFAM" id="SSF52317">
    <property type="entry name" value="Class I glutamine amidotransferase-like"/>
    <property type="match status" value="1"/>
</dbReference>
<dbReference type="SUPFAM" id="SSF52540">
    <property type="entry name" value="P-loop containing nucleoside triphosphate hydrolases"/>
    <property type="match status" value="1"/>
</dbReference>
<dbReference type="PROSITE" id="PS51273">
    <property type="entry name" value="GATASE_TYPE_1"/>
    <property type="match status" value="1"/>
</dbReference>
<accession>Q9JYJ8</accession>
<evidence type="ECO:0000255" key="1">
    <source>
        <dbReference type="HAMAP-Rule" id="MF_01227"/>
    </source>
</evidence>
<keyword id="KW-0067">ATP-binding</keyword>
<keyword id="KW-0315">Glutamine amidotransferase</keyword>
<keyword id="KW-0436">Ligase</keyword>
<keyword id="KW-0460">Magnesium</keyword>
<keyword id="KW-0479">Metal-binding</keyword>
<keyword id="KW-0547">Nucleotide-binding</keyword>
<keyword id="KW-0665">Pyrimidine biosynthesis</keyword>
<keyword id="KW-1185">Reference proteome</keyword>
<name>PYRG_NEIMB</name>
<comment type="function">
    <text evidence="1">Catalyzes the ATP-dependent amination of UTP to CTP with either L-glutamine or ammonia as the source of nitrogen. Regulates intracellular CTP levels through interactions with the four ribonucleotide triphosphates.</text>
</comment>
<comment type="catalytic activity">
    <reaction evidence="1">
        <text>UTP + L-glutamine + ATP + H2O = CTP + L-glutamate + ADP + phosphate + 2 H(+)</text>
        <dbReference type="Rhea" id="RHEA:26426"/>
        <dbReference type="ChEBI" id="CHEBI:15377"/>
        <dbReference type="ChEBI" id="CHEBI:15378"/>
        <dbReference type="ChEBI" id="CHEBI:29985"/>
        <dbReference type="ChEBI" id="CHEBI:30616"/>
        <dbReference type="ChEBI" id="CHEBI:37563"/>
        <dbReference type="ChEBI" id="CHEBI:43474"/>
        <dbReference type="ChEBI" id="CHEBI:46398"/>
        <dbReference type="ChEBI" id="CHEBI:58359"/>
        <dbReference type="ChEBI" id="CHEBI:456216"/>
        <dbReference type="EC" id="6.3.4.2"/>
    </reaction>
</comment>
<comment type="catalytic activity">
    <reaction evidence="1">
        <text>L-glutamine + H2O = L-glutamate + NH4(+)</text>
        <dbReference type="Rhea" id="RHEA:15889"/>
        <dbReference type="ChEBI" id="CHEBI:15377"/>
        <dbReference type="ChEBI" id="CHEBI:28938"/>
        <dbReference type="ChEBI" id="CHEBI:29985"/>
        <dbReference type="ChEBI" id="CHEBI:58359"/>
    </reaction>
</comment>
<comment type="catalytic activity">
    <reaction evidence="1">
        <text>UTP + NH4(+) + ATP = CTP + ADP + phosphate + 2 H(+)</text>
        <dbReference type="Rhea" id="RHEA:16597"/>
        <dbReference type="ChEBI" id="CHEBI:15378"/>
        <dbReference type="ChEBI" id="CHEBI:28938"/>
        <dbReference type="ChEBI" id="CHEBI:30616"/>
        <dbReference type="ChEBI" id="CHEBI:37563"/>
        <dbReference type="ChEBI" id="CHEBI:43474"/>
        <dbReference type="ChEBI" id="CHEBI:46398"/>
        <dbReference type="ChEBI" id="CHEBI:456216"/>
    </reaction>
</comment>
<comment type="activity regulation">
    <text evidence="1">Allosterically activated by GTP, when glutamine is the substrate; GTP has no effect on the reaction when ammonia is the substrate. The allosteric effector GTP functions by stabilizing the protein conformation that binds the tetrahedral intermediate(s) formed during glutamine hydrolysis. Inhibited by the product CTP, via allosteric rather than competitive inhibition.</text>
</comment>
<comment type="pathway">
    <text evidence="1">Pyrimidine metabolism; CTP biosynthesis via de novo pathway; CTP from UDP: step 2/2.</text>
</comment>
<comment type="subunit">
    <text evidence="1">Homotetramer.</text>
</comment>
<comment type="miscellaneous">
    <text evidence="1">CTPSs have evolved a hybrid strategy for distinguishing between UTP and CTP. The overlapping regions of the product feedback inhibitory and substrate sites recognize a common feature in both compounds, the triphosphate moiety. To differentiate isosteric substrate and product pyrimidine rings, an additional pocket far from the expected kinase/ligase catalytic site, specifically recognizes the cytosine and ribose portions of the product inhibitor.</text>
</comment>
<comment type="similarity">
    <text evidence="1">Belongs to the CTP synthase family.</text>
</comment>
<sequence>MTKFIFVTGGVVSSLGKGIAAASIAAILESRGLNVTMLKLDPYINVDPGTMSPFQHGEVFVTDDGAETDLDLGHYERFIDSTMTRRNSFSTGQVYENVIAKERRGDYLGGTVQVIPHITDEIKRRIHEGAAGYDVAIVEIGGTVGDIESLPFLEAIRQMRSQLGRNNTLFAHLSYVPYIAAAGEIKTKPTQHTVKEMLSIGLQPDILICRMDRTMPADERRKIALFCNVEERAIVGSYDVDSIYECPEMLHDQGIDNIITEQLQLNVQQADLTAWKKIVHAIQNPKHTVKIAMVGKYVDLTESYKSLIEALKHAGIHTETDVQITFVDSENIEKNKGDVSMLKDMDAILVPGGFGSRGVEGKIAAVRYARENNVPYLGICLGMQIALIEYARDVAGLKGANSTEFDLKCAAPVVALIDEWQTADGSVETRDESTDLGGTMRLGAQEVELKAGSLAAKIYGSGHIRERHRHRYEVNNNYVPTLEQAGLVIGGVSAGRERLVETIELPNHPWFFACQFHPEFTSNPRKGHPLFTAFVKAALNNKKA</sequence>
<gene>
    <name evidence="1" type="primary">pyrG</name>
    <name type="ordered locus">NMB1554</name>
</gene>
<organism>
    <name type="scientific">Neisseria meningitidis serogroup B (strain ATCC BAA-335 / MC58)</name>
    <dbReference type="NCBI Taxonomy" id="122586"/>
    <lineage>
        <taxon>Bacteria</taxon>
        <taxon>Pseudomonadati</taxon>
        <taxon>Pseudomonadota</taxon>
        <taxon>Betaproteobacteria</taxon>
        <taxon>Neisseriales</taxon>
        <taxon>Neisseriaceae</taxon>
        <taxon>Neisseria</taxon>
    </lineage>
</organism>
<feature type="chain" id="PRO_0000138206" description="CTP synthase">
    <location>
        <begin position="1"/>
        <end position="544"/>
    </location>
</feature>
<feature type="domain" description="Glutamine amidotransferase type-1" evidence="1">
    <location>
        <begin position="290"/>
        <end position="544"/>
    </location>
</feature>
<feature type="region of interest" description="Amidoligase domain" evidence="1">
    <location>
        <begin position="1"/>
        <end position="265"/>
    </location>
</feature>
<feature type="active site" description="Nucleophile; for glutamine hydrolysis" evidence="1">
    <location>
        <position position="380"/>
    </location>
</feature>
<feature type="active site" evidence="1">
    <location>
        <position position="517"/>
    </location>
</feature>
<feature type="active site" evidence="1">
    <location>
        <position position="519"/>
    </location>
</feature>
<feature type="binding site" evidence="1">
    <location>
        <position position="13"/>
    </location>
    <ligand>
        <name>CTP</name>
        <dbReference type="ChEBI" id="CHEBI:37563"/>
        <note>allosteric inhibitor</note>
    </ligand>
</feature>
<feature type="binding site" evidence="1">
    <location>
        <position position="13"/>
    </location>
    <ligand>
        <name>UTP</name>
        <dbReference type="ChEBI" id="CHEBI:46398"/>
    </ligand>
</feature>
<feature type="binding site" evidence="1">
    <location>
        <begin position="14"/>
        <end position="19"/>
    </location>
    <ligand>
        <name>ATP</name>
        <dbReference type="ChEBI" id="CHEBI:30616"/>
    </ligand>
</feature>
<feature type="binding site" evidence="1">
    <location>
        <position position="71"/>
    </location>
    <ligand>
        <name>ATP</name>
        <dbReference type="ChEBI" id="CHEBI:30616"/>
    </ligand>
</feature>
<feature type="binding site" evidence="1">
    <location>
        <position position="71"/>
    </location>
    <ligand>
        <name>Mg(2+)</name>
        <dbReference type="ChEBI" id="CHEBI:18420"/>
    </ligand>
</feature>
<feature type="binding site" evidence="1">
    <location>
        <position position="139"/>
    </location>
    <ligand>
        <name>Mg(2+)</name>
        <dbReference type="ChEBI" id="CHEBI:18420"/>
    </ligand>
</feature>
<feature type="binding site" evidence="1">
    <location>
        <begin position="146"/>
        <end position="148"/>
    </location>
    <ligand>
        <name>CTP</name>
        <dbReference type="ChEBI" id="CHEBI:37563"/>
        <note>allosteric inhibitor</note>
    </ligand>
</feature>
<feature type="binding site" evidence="1">
    <location>
        <begin position="186"/>
        <end position="191"/>
    </location>
    <ligand>
        <name>CTP</name>
        <dbReference type="ChEBI" id="CHEBI:37563"/>
        <note>allosteric inhibitor</note>
    </ligand>
</feature>
<feature type="binding site" evidence="1">
    <location>
        <begin position="186"/>
        <end position="191"/>
    </location>
    <ligand>
        <name>UTP</name>
        <dbReference type="ChEBI" id="CHEBI:46398"/>
    </ligand>
</feature>
<feature type="binding site" evidence="1">
    <location>
        <position position="222"/>
    </location>
    <ligand>
        <name>CTP</name>
        <dbReference type="ChEBI" id="CHEBI:37563"/>
        <note>allosteric inhibitor</note>
    </ligand>
</feature>
<feature type="binding site" evidence="1">
    <location>
        <position position="222"/>
    </location>
    <ligand>
        <name>UTP</name>
        <dbReference type="ChEBI" id="CHEBI:46398"/>
    </ligand>
</feature>
<feature type="binding site" evidence="1">
    <location>
        <position position="353"/>
    </location>
    <ligand>
        <name>L-glutamine</name>
        <dbReference type="ChEBI" id="CHEBI:58359"/>
    </ligand>
</feature>
<feature type="binding site" evidence="1">
    <location>
        <begin position="381"/>
        <end position="384"/>
    </location>
    <ligand>
        <name>L-glutamine</name>
        <dbReference type="ChEBI" id="CHEBI:58359"/>
    </ligand>
</feature>
<feature type="binding site" evidence="1">
    <location>
        <position position="404"/>
    </location>
    <ligand>
        <name>L-glutamine</name>
        <dbReference type="ChEBI" id="CHEBI:58359"/>
    </ligand>
</feature>
<feature type="binding site" evidence="1">
    <location>
        <position position="471"/>
    </location>
    <ligand>
        <name>L-glutamine</name>
        <dbReference type="ChEBI" id="CHEBI:58359"/>
    </ligand>
</feature>
<reference key="1">
    <citation type="journal article" date="2000" name="Science">
        <title>Complete genome sequence of Neisseria meningitidis serogroup B strain MC58.</title>
        <authorList>
            <person name="Tettelin H."/>
            <person name="Saunders N.J."/>
            <person name="Heidelberg J.F."/>
            <person name="Jeffries A.C."/>
            <person name="Nelson K.E."/>
            <person name="Eisen J.A."/>
            <person name="Ketchum K.A."/>
            <person name="Hood D.W."/>
            <person name="Peden J.F."/>
            <person name="Dodson R.J."/>
            <person name="Nelson W.C."/>
            <person name="Gwinn M.L."/>
            <person name="DeBoy R.T."/>
            <person name="Peterson J.D."/>
            <person name="Hickey E.K."/>
            <person name="Haft D.H."/>
            <person name="Salzberg S.L."/>
            <person name="White O."/>
            <person name="Fleischmann R.D."/>
            <person name="Dougherty B.A."/>
            <person name="Mason T.M."/>
            <person name="Ciecko A."/>
            <person name="Parksey D.S."/>
            <person name="Blair E."/>
            <person name="Cittone H."/>
            <person name="Clark E.B."/>
            <person name="Cotton M.D."/>
            <person name="Utterback T.R."/>
            <person name="Khouri H.M."/>
            <person name="Qin H."/>
            <person name="Vamathevan J.J."/>
            <person name="Gill J."/>
            <person name="Scarlato V."/>
            <person name="Masignani V."/>
            <person name="Pizza M."/>
            <person name="Grandi G."/>
            <person name="Sun L."/>
            <person name="Smith H.O."/>
            <person name="Fraser C.M."/>
            <person name="Moxon E.R."/>
            <person name="Rappuoli R."/>
            <person name="Venter J.C."/>
        </authorList>
    </citation>
    <scope>NUCLEOTIDE SEQUENCE [LARGE SCALE GENOMIC DNA]</scope>
    <source>
        <strain>ATCC BAA-335 / MC58</strain>
    </source>
</reference>
<proteinExistence type="inferred from homology"/>